<reference key="1">
    <citation type="journal article" date="1987" name="Virology">
        <title>Nucleotide sequence analysis of the LTRs and env genes of SM-FeSV and GA-FeSV.</title>
        <authorList>
            <person name="Guilhot S."/>
            <person name="Hampe A."/>
            <person name="D'Auriol L."/>
            <person name="Galibert F."/>
        </authorList>
    </citation>
    <scope>NUCLEOTIDE SEQUENCE [GENOMIC DNA]</scope>
</reference>
<sequence length="645" mass="71594">MEGPTHPKPFKDKTFSWDLIILVGVVRVLLRLDVGMANPSPHQVYNVTWVITNVQTNSQANATSMLGTLTDAYPTLHVDLCDLVGDTWEPIVLDPSNVKHGARYSSSKYGCKTTDRKKQQQTYPFYVCPGHAPSMGPKGTHCGGAHDGFCAAWGCETTGEAWWKPTSSWDYITVKRGSSQDTSCDKNCNPLVLQFTQKGRQASWDGPKLWGLRLYRTGYDPIALFSVSRQVSTIMPPQAMGPNLVLPEQKPPSRQSQTKSKVATQKPQTNGTTPRSVAPATMSPKRIGTRDRLINLVQGTYLALNATDPNKTKDCWLCLVSRPPYYEGIAILGNYSNQTNPPPSCLSTPQHKLTISEVSGQGLCIGTVPRTHQALCNKTQQGHTGAHYLAAPNGTYWACNTGLTPCISMAVLNWTSDFCVLIELWPRVTYHQPEYIYTHFDKAVRFRREPISLTVALMLGGLTVGGIAAGVGTGTKALLETAQFRQLQIAMHTDIQALEESISALEKSLTSLSEVVLQNRRGLDILFLQGGGLCAALKEECCFYADHTGLVRDNMAKLRERLKQRQQLFDSQQGWFEGWFNKSPWFTTLISSIMGPLLILLLILLFGPCILNRLVQFVKDRISVVQALILTQQYQQIQQYDPDRP</sequence>
<proteinExistence type="inferred from homology"/>
<gene>
    <name type="primary">env</name>
</gene>
<keyword id="KW-0165">Cleavage on pair of basic residues</keyword>
<keyword id="KW-0175">Coiled coil</keyword>
<keyword id="KW-1015">Disulfide bond</keyword>
<keyword id="KW-1169">Fusion of virus membrane with host cell membrane</keyword>
<keyword id="KW-1168">Fusion of virus membrane with host membrane</keyword>
<keyword id="KW-0325">Glycoprotein</keyword>
<keyword id="KW-1032">Host cell membrane</keyword>
<keyword id="KW-1043">Host membrane</keyword>
<keyword id="KW-0945">Host-virus interaction</keyword>
<keyword id="KW-0449">Lipoprotein</keyword>
<keyword id="KW-0472">Membrane</keyword>
<keyword id="KW-0564">Palmitate</keyword>
<keyword id="KW-0732">Signal</keyword>
<keyword id="KW-0812">Transmembrane</keyword>
<keyword id="KW-1133">Transmembrane helix</keyword>
<keyword id="KW-1161">Viral attachment to host cell</keyword>
<keyword id="KW-0261">Viral envelope protein</keyword>
<keyword id="KW-1162">Viral penetration into host cytoplasm</keyword>
<keyword id="KW-0946">Virion</keyword>
<keyword id="KW-1160">Virus entry into host cell</keyword>
<organism>
    <name type="scientific">Feline sarcoma virus (strain SM)</name>
    <name type="common">Sm-FeSV</name>
    <dbReference type="NCBI Taxonomy" id="11779"/>
    <lineage>
        <taxon>Viruses</taxon>
        <taxon>Riboviria</taxon>
        <taxon>Pararnavirae</taxon>
        <taxon>Artverviricota</taxon>
        <taxon>Revtraviricetes</taxon>
        <taxon>Ortervirales</taxon>
        <taxon>Retroviridae</taxon>
        <taxon>Orthoretrovirinae</taxon>
        <taxon>Gammaretrovirus</taxon>
        <taxon>Feline leukemia virus</taxon>
    </lineage>
</organism>
<feature type="signal peptide" evidence="2">
    <location>
        <begin position="1"/>
        <end position="36"/>
    </location>
</feature>
<feature type="chain" id="PRO_0000239572" description="Envelope glycoprotein">
    <location>
        <begin position="37"/>
        <end position="645"/>
    </location>
</feature>
<feature type="chain" id="PRO_0000040727" description="Surface protein" evidence="1">
    <location>
        <begin position="37"/>
        <end position="448"/>
    </location>
</feature>
<feature type="chain" id="PRO_0000040728" description="Transmembrane protein" evidence="1">
    <location>
        <begin position="449"/>
        <end position="628"/>
    </location>
</feature>
<feature type="peptide" id="PRO_0000239573" description="R-peptide" evidence="1">
    <location>
        <begin position="629"/>
        <end position="645"/>
    </location>
</feature>
<feature type="topological domain" description="Extracellular" evidence="2">
    <location>
        <begin position="37"/>
        <end position="589"/>
    </location>
</feature>
<feature type="transmembrane region" description="Helical" evidence="2">
    <location>
        <begin position="590"/>
        <end position="610"/>
    </location>
</feature>
<feature type="topological domain" description="Cytoplasmic" evidence="2">
    <location>
        <begin position="611"/>
        <end position="645"/>
    </location>
</feature>
<feature type="region of interest" description="Disordered" evidence="3">
    <location>
        <begin position="238"/>
        <end position="283"/>
    </location>
</feature>
<feature type="region of interest" description="Fusion peptide" evidence="2">
    <location>
        <begin position="451"/>
        <end position="471"/>
    </location>
</feature>
<feature type="region of interest" description="Immunosuppression" evidence="1">
    <location>
        <begin position="517"/>
        <end position="533"/>
    </location>
</feature>
<feature type="coiled-coil region" evidence="2">
    <location>
        <begin position="479"/>
        <end position="528"/>
    </location>
</feature>
<feature type="coiled-coil region" evidence="2">
    <location>
        <begin position="538"/>
        <end position="574"/>
    </location>
</feature>
<feature type="short sequence motif" description="CXXC">
    <location>
        <begin position="315"/>
        <end position="318"/>
    </location>
</feature>
<feature type="short sequence motif" description="CX6CC">
    <location>
        <begin position="534"/>
        <end position="542"/>
    </location>
</feature>
<feature type="compositionally biased region" description="Polar residues" evidence="3">
    <location>
        <begin position="252"/>
        <end position="275"/>
    </location>
</feature>
<feature type="site" description="Cleavage; by host" evidence="1">
    <location>
        <begin position="448"/>
        <end position="449"/>
    </location>
</feature>
<feature type="site" description="Cleavage; by viral protease" evidence="1">
    <location>
        <begin position="628"/>
        <end position="629"/>
    </location>
</feature>
<feature type="lipid moiety-binding region" description="S-palmitoyl cysteine; by host" evidence="1">
    <location>
        <position position="609"/>
    </location>
</feature>
<feature type="glycosylation site" description="N-linked (GlcNAc...) asparagine; by host" evidence="2">
    <location>
        <position position="46"/>
    </location>
</feature>
<feature type="glycosylation site" description="N-linked (GlcNAc...) asparagine; by host" evidence="2">
    <location>
        <position position="61"/>
    </location>
</feature>
<feature type="glycosylation site" description="N-linked (GlcNAc...) asparagine; by host" evidence="2">
    <location>
        <position position="270"/>
    </location>
</feature>
<feature type="glycosylation site" description="N-linked (GlcNAc...) asparagine; by host" evidence="2">
    <location>
        <position position="305"/>
    </location>
</feature>
<feature type="glycosylation site" description="N-linked (GlcNAc...) asparagine; by host" evidence="2">
    <location>
        <position position="310"/>
    </location>
</feature>
<feature type="glycosylation site" description="N-linked (GlcNAc...) asparagine; by host" evidence="2">
    <location>
        <position position="334"/>
    </location>
</feature>
<feature type="glycosylation site" description="N-linked (GlcNAc...) asparagine; by host" evidence="2">
    <location>
        <position position="337"/>
    </location>
</feature>
<feature type="glycosylation site" description="N-linked (GlcNAc...) asparagine; by host" evidence="2">
    <location>
        <position position="377"/>
    </location>
</feature>
<feature type="glycosylation site" description="N-linked (GlcNAc...) asparagine; by host" evidence="2">
    <location>
        <position position="393"/>
    </location>
</feature>
<feature type="glycosylation site" description="N-linked (GlcNAc...) asparagine; by host" evidence="2">
    <location>
        <position position="413"/>
    </location>
</feature>
<feature type="disulfide bond" evidence="1">
    <location>
        <begin position="128"/>
        <end position="150"/>
    </location>
</feature>
<feature type="disulfide bond" evidence="1">
    <location>
        <begin position="142"/>
        <end position="155"/>
    </location>
</feature>
<feature type="disulfide bond" description="Interchain (between SU and TM chains, or C-318 with C-542); in linked form" evidence="1">
    <location>
        <begin position="315"/>
        <end position="542"/>
    </location>
</feature>
<feature type="disulfide bond" evidence="1">
    <location>
        <begin position="315"/>
        <end position="318"/>
    </location>
</feature>
<feature type="disulfide bond" evidence="1">
    <location>
        <begin position="534"/>
        <end position="541"/>
    </location>
</feature>
<organismHost>
    <name type="scientific">Felidae</name>
    <name type="common">cat family</name>
    <dbReference type="NCBI Taxonomy" id="9681"/>
</organismHost>
<name>ENV_FSVSM</name>
<protein>
    <recommendedName>
        <fullName>Envelope glycoprotein</fullName>
    </recommendedName>
    <alternativeName>
        <fullName>Env polyprotein</fullName>
    </alternativeName>
    <component>
        <recommendedName>
            <fullName>Surface protein</fullName>
            <shortName>SU</shortName>
        </recommendedName>
        <alternativeName>
            <fullName>Glycoprotein 70</fullName>
            <shortName>gp70</shortName>
        </alternativeName>
    </component>
    <component>
        <recommendedName>
            <fullName>Transmembrane protein</fullName>
            <shortName>TM</shortName>
        </recommendedName>
        <alternativeName>
            <fullName>Envelope protein p15E</fullName>
        </alternativeName>
    </component>
    <component>
        <recommendedName>
            <fullName>R-peptide</fullName>
        </recommendedName>
        <alternativeName>
            <fullName>p2E</fullName>
        </alternativeName>
    </component>
</protein>
<evidence type="ECO:0000250" key="1"/>
<evidence type="ECO:0000255" key="2"/>
<evidence type="ECO:0000256" key="3">
    <source>
        <dbReference type="SAM" id="MobiDB-lite"/>
    </source>
</evidence>
<dbReference type="EMBL" id="M23025">
    <property type="protein sequence ID" value="AAA74004.1"/>
    <property type="molecule type" value="Genomic_DNA"/>
</dbReference>
<dbReference type="PIR" id="A33741">
    <property type="entry name" value="VCMVSS"/>
</dbReference>
<dbReference type="SMR" id="P21445"/>
<dbReference type="GlyCosmos" id="P21445">
    <property type="glycosylation" value="10 sites, No reported glycans"/>
</dbReference>
<dbReference type="GO" id="GO:0020002">
    <property type="term" value="C:host cell plasma membrane"/>
    <property type="evidence" value="ECO:0007669"/>
    <property type="project" value="UniProtKB-SubCell"/>
</dbReference>
<dbReference type="GO" id="GO:0016020">
    <property type="term" value="C:membrane"/>
    <property type="evidence" value="ECO:0007669"/>
    <property type="project" value="UniProtKB-KW"/>
</dbReference>
<dbReference type="GO" id="GO:0019031">
    <property type="term" value="C:viral envelope"/>
    <property type="evidence" value="ECO:0007669"/>
    <property type="project" value="UniProtKB-KW"/>
</dbReference>
<dbReference type="GO" id="GO:0055036">
    <property type="term" value="C:virion membrane"/>
    <property type="evidence" value="ECO:0007669"/>
    <property type="project" value="UniProtKB-SubCell"/>
</dbReference>
<dbReference type="GO" id="GO:0019064">
    <property type="term" value="P:fusion of virus membrane with host plasma membrane"/>
    <property type="evidence" value="ECO:0007669"/>
    <property type="project" value="UniProtKB-KW"/>
</dbReference>
<dbReference type="GO" id="GO:0046718">
    <property type="term" value="P:symbiont entry into host cell"/>
    <property type="evidence" value="ECO:0007669"/>
    <property type="project" value="UniProtKB-KW"/>
</dbReference>
<dbReference type="GO" id="GO:0019062">
    <property type="term" value="P:virion attachment to host cell"/>
    <property type="evidence" value="ECO:0007669"/>
    <property type="project" value="UniProtKB-KW"/>
</dbReference>
<dbReference type="CDD" id="cd09851">
    <property type="entry name" value="HTLV-1-like_HR1-HR2"/>
    <property type="match status" value="1"/>
</dbReference>
<dbReference type="Gene3D" id="1.10.287.210">
    <property type="match status" value="1"/>
</dbReference>
<dbReference type="Gene3D" id="3.90.310.10">
    <property type="entry name" value="ENV polyprotein, receptor-binding domain"/>
    <property type="match status" value="1"/>
</dbReference>
<dbReference type="InterPro" id="IPR008981">
    <property type="entry name" value="FMuLV_rcpt-bd"/>
</dbReference>
<dbReference type="InterPro" id="IPR018154">
    <property type="entry name" value="TLV/ENV_coat_polyprotein"/>
</dbReference>
<dbReference type="PANTHER" id="PTHR10424:SF72">
    <property type="entry name" value="BC035947 PROTEIN-RELATED"/>
    <property type="match status" value="1"/>
</dbReference>
<dbReference type="PANTHER" id="PTHR10424">
    <property type="entry name" value="VIRAL ENVELOPE PROTEIN"/>
    <property type="match status" value="1"/>
</dbReference>
<dbReference type="Pfam" id="PF00429">
    <property type="entry name" value="TLV_coat"/>
    <property type="match status" value="1"/>
</dbReference>
<dbReference type="SUPFAM" id="SSF49830">
    <property type="entry name" value="ENV polyprotein, receptor-binding domain"/>
    <property type="match status" value="1"/>
</dbReference>
<dbReference type="SUPFAM" id="SSF58069">
    <property type="entry name" value="Virus ectodomain"/>
    <property type="match status" value="1"/>
</dbReference>
<accession>P21445</accession>
<comment type="function">
    <text evidence="1">The surface protein (SU) attaches the virus to the host cell by binding to its receptor. This interaction triggers the refolding of the transmembrane protein (TM) and is thought to activate its fusogenic potential by unmasking its fusion peptide. Fusion occurs at the host cell plasma membrane (By similarity).</text>
</comment>
<comment type="function">
    <text evidence="1">The transmembrane protein (TM) acts as a class I viral fusion protein. Under the current model, the protein has at least 3 conformational states: pre-fusion native state, pre-hairpin intermediate state, and post-fusion hairpin state. During viral and target cell membrane fusion, the coiled coil regions (heptad repeats) assume a trimer-of-hairpins structure, positioning the fusion peptide in close proximity to the C-terminal region of the ectodomain. The formation of this structure appears to drive apposition and subsequent fusion of viral and target cell membranes. Membranes fusion leads to delivery of the nucleocapsid into the cytoplasm (By similarity).</text>
</comment>
<comment type="subunit">
    <text evidence="1">The mature envelope protein (Env) consists of a trimer of SU-TM heterodimers attached by a labile interchain disulfide bond.</text>
</comment>
<comment type="subcellular location">
    <molecule>Transmembrane protein</molecule>
    <subcellularLocation>
        <location evidence="1">Virion membrane</location>
        <topology evidence="1">Single-pass type I membrane protein</topology>
    </subcellularLocation>
    <subcellularLocation>
        <location evidence="1">Host cell membrane</location>
        <topology evidence="1">Single-pass type I membrane protein</topology>
    </subcellularLocation>
</comment>
<comment type="subcellular location">
    <molecule>Surface protein</molecule>
    <subcellularLocation>
        <location>Virion membrane</location>
        <topology>Peripheral membrane protein</topology>
    </subcellularLocation>
    <subcellularLocation>
        <location evidence="1">Host cell membrane</location>
        <topology evidence="1">Peripheral membrane protein</topology>
    </subcellularLocation>
    <text evidence="1">The surface protein is not anchored to the viral envelope, but associates with the extravirion surface through its binding to TM. Both proteins are thought to be concentrated at the site of budding and incorporated into the virions possibly by contacts between the cytoplasmic tail of Env and the N-terminus of Gag (By similarity).</text>
</comment>
<comment type="subcellular location">
    <molecule>R-peptide</molecule>
    <subcellularLocation>
        <location evidence="1">Host cell membrane</location>
        <topology evidence="1">Peripheral membrane protein</topology>
    </subcellularLocation>
    <text evidence="1">The R-peptide is membrane-associated through its palmitate.</text>
</comment>
<comment type="domain">
    <text evidence="1">The 17 amino acids long immunosuppressive region is present in many retroviral envelope proteins. Synthetic peptides derived from this relatively conserved sequence inhibit immune function in vitro and in vivo (By similarity).</text>
</comment>
<comment type="PTM">
    <text evidence="1">Specific enzymatic cleavages in vivo yield mature proteins. Envelope glycoproteins are synthesized as an inactive precursor that is N-glycosylated and processed likely by host cell furin or by a furin-like protease in the Golgi to yield the mature SU and TM proteins. The cleavage site between SU and TM requires the minimal sequence [KR]-X-[KR]-R. The R-peptide is released from the C-terminus of the cytoplasmic tail of the TM protein upon particle formation as a result of proteolytic cleavage by the viral protease. Cleavage of this peptide is required for TM to become fusogenic (By similarity).</text>
</comment>
<comment type="PTM">
    <text evidence="1">The CXXC motif is highly conserved across a broad range of retroviral envelope proteins. It is thought to participate in the formation of a labile disulfide bond possibly with the CX6CC motif present in the transmembrane protein. Isomerization of the intersubunit disulfide bond to an SU intrachain disulfide bond is thought to occur upon receptor recognition in order to allow membrane fusion (By similarity).</text>
</comment>
<comment type="PTM">
    <text evidence="1">The transmembrane protein is palmitoylated.</text>
</comment>
<comment type="PTM">
    <text evidence="1">The R-peptide is palmitoylated.</text>
</comment>